<evidence type="ECO:0000255" key="1">
    <source>
        <dbReference type="HAMAP-Rule" id="MF_00054"/>
    </source>
</evidence>
<sequence>MSDRKYPLERVRNIGIIAHIDAGKTTTTERILYLTKRTHKIGNIDEGTTVMDWMEQEKARGITITSAATSAYWNGHHLNIIDTPGHVDFTAEVERSLRVLDGGVVVFDGVAGVEAQSETVWRQASRYGVPRICFINKMDRTGANYERTLGMIAERLKAKYLPLQIPIGCAETFRGNCDLLDFKCYGMDNSPEEPVETFDLPAAEKERAVKFRNMMIERLAEEDDEVMEAYLAGEELPIEKLKAAIRRVCLANKAIPIFCGTSLRNKGVKRLLDAVCDYLPSPLDIPAMKGTDPKTGESIERHTSDTEPFSALAFKIVSDPFVGRLVYFRIYSGSISAGSGAYNSTRGERERIGRLIRMHANDREEIEYADAGEIVASLGLRNTFTGDTLCDQNAPILLENIKFPEPVINLAIEPKTRSDQDKMTEGLQKLAEEDPTFKVKFDDETGQTVIYGMGELHLDVLVSRLLSEFKVNAGVGKPRVAYREAITAHAKAQGKFVRQSGGRGQYGDVTIEIEPRERGAGYEFVDNVKGGAIPRNFLMAAESGIRDTLETGVYAGYPMVDVKVIATDGSYHDVDSNENAFKMAGSMAIKAAVAKAKPILLEPIMKLEAVTPEEYMGDVIGDLNSRRGQIISVEPSPETTVITGTVPLAESFGYTTDLRSVTKGRATFSMEFESYREMPGELATQVVEAAGKK</sequence>
<protein>
    <recommendedName>
        <fullName evidence="1">Elongation factor G</fullName>
        <shortName evidence="1">EF-G</shortName>
    </recommendedName>
</protein>
<comment type="function">
    <text evidence="1">Catalyzes the GTP-dependent ribosomal translocation step during translation elongation. During this step, the ribosome changes from the pre-translocational (PRE) to the post-translocational (POST) state as the newly formed A-site-bound peptidyl-tRNA and P-site-bound deacylated tRNA move to the P and E sites, respectively. Catalyzes the coordinated movement of the two tRNA molecules, the mRNA and conformational changes in the ribosome.</text>
</comment>
<comment type="subcellular location">
    <subcellularLocation>
        <location evidence="1">Cytoplasm</location>
    </subcellularLocation>
</comment>
<comment type="similarity">
    <text evidence="1">Belongs to the TRAFAC class translation factor GTPase superfamily. Classic translation factor GTPase family. EF-G/EF-2 subfamily.</text>
</comment>
<proteinExistence type="inferred from homology"/>
<reference key="1">
    <citation type="submission" date="2007-05" db="EMBL/GenBank/DDBJ databases">
        <title>Complete sequence of Dehalococcoides sp. BAV1.</title>
        <authorList>
            <consortium name="US DOE Joint Genome Institute"/>
            <person name="Copeland A."/>
            <person name="Lucas S."/>
            <person name="Lapidus A."/>
            <person name="Barry K."/>
            <person name="Detter J.C."/>
            <person name="Glavina del Rio T."/>
            <person name="Hammon N."/>
            <person name="Israni S."/>
            <person name="Pitluck S."/>
            <person name="Lowry S."/>
            <person name="Clum A."/>
            <person name="Schmutz J."/>
            <person name="Larimer F."/>
            <person name="Land M."/>
            <person name="Hauser L."/>
            <person name="Kyrpides N."/>
            <person name="Kim E."/>
            <person name="Ritalahti K.M."/>
            <person name="Loeffler F."/>
            <person name="Richardson P."/>
        </authorList>
    </citation>
    <scope>NUCLEOTIDE SEQUENCE [LARGE SCALE GENOMIC DNA]</scope>
    <source>
        <strain>ATCC BAA-2100 / JCM 16839 / KCTC 5957 / BAV1</strain>
    </source>
</reference>
<keyword id="KW-0963">Cytoplasm</keyword>
<keyword id="KW-0251">Elongation factor</keyword>
<keyword id="KW-0342">GTP-binding</keyword>
<keyword id="KW-0547">Nucleotide-binding</keyword>
<keyword id="KW-0648">Protein biosynthesis</keyword>
<name>EFG_DEHMB</name>
<organism>
    <name type="scientific">Dehalococcoides mccartyi (strain ATCC BAA-2100 / JCM 16839 / KCTC 5957 / BAV1)</name>
    <dbReference type="NCBI Taxonomy" id="216389"/>
    <lineage>
        <taxon>Bacteria</taxon>
        <taxon>Bacillati</taxon>
        <taxon>Chloroflexota</taxon>
        <taxon>Dehalococcoidia</taxon>
        <taxon>Dehalococcoidales</taxon>
        <taxon>Dehalococcoidaceae</taxon>
        <taxon>Dehalococcoides</taxon>
    </lineage>
</organism>
<feature type="chain" id="PRO_1000074956" description="Elongation factor G">
    <location>
        <begin position="1"/>
        <end position="693"/>
    </location>
</feature>
<feature type="domain" description="tr-type G">
    <location>
        <begin position="9"/>
        <end position="283"/>
    </location>
</feature>
<feature type="binding site" evidence="1">
    <location>
        <begin position="18"/>
        <end position="25"/>
    </location>
    <ligand>
        <name>GTP</name>
        <dbReference type="ChEBI" id="CHEBI:37565"/>
    </ligand>
</feature>
<feature type="binding site" evidence="1">
    <location>
        <begin position="82"/>
        <end position="86"/>
    </location>
    <ligand>
        <name>GTP</name>
        <dbReference type="ChEBI" id="CHEBI:37565"/>
    </ligand>
</feature>
<feature type="binding site" evidence="1">
    <location>
        <begin position="136"/>
        <end position="139"/>
    </location>
    <ligand>
        <name>GTP</name>
        <dbReference type="ChEBI" id="CHEBI:37565"/>
    </ligand>
</feature>
<dbReference type="EMBL" id="CP000688">
    <property type="protein sequence ID" value="ABQ17034.1"/>
    <property type="molecule type" value="Genomic_DNA"/>
</dbReference>
<dbReference type="SMR" id="A5FRY7"/>
<dbReference type="KEGG" id="deb:DehaBAV1_0449"/>
<dbReference type="PATRIC" id="fig|216389.18.peg.492"/>
<dbReference type="HOGENOM" id="CLU_002794_4_1_0"/>
<dbReference type="GO" id="GO:0005737">
    <property type="term" value="C:cytoplasm"/>
    <property type="evidence" value="ECO:0007669"/>
    <property type="project" value="UniProtKB-SubCell"/>
</dbReference>
<dbReference type="GO" id="GO:0005525">
    <property type="term" value="F:GTP binding"/>
    <property type="evidence" value="ECO:0007669"/>
    <property type="project" value="UniProtKB-UniRule"/>
</dbReference>
<dbReference type="GO" id="GO:0003924">
    <property type="term" value="F:GTPase activity"/>
    <property type="evidence" value="ECO:0007669"/>
    <property type="project" value="InterPro"/>
</dbReference>
<dbReference type="GO" id="GO:0003746">
    <property type="term" value="F:translation elongation factor activity"/>
    <property type="evidence" value="ECO:0007669"/>
    <property type="project" value="UniProtKB-UniRule"/>
</dbReference>
<dbReference type="GO" id="GO:0032790">
    <property type="term" value="P:ribosome disassembly"/>
    <property type="evidence" value="ECO:0007669"/>
    <property type="project" value="TreeGrafter"/>
</dbReference>
<dbReference type="CDD" id="cd01886">
    <property type="entry name" value="EF-G"/>
    <property type="match status" value="1"/>
</dbReference>
<dbReference type="CDD" id="cd16262">
    <property type="entry name" value="EFG_III"/>
    <property type="match status" value="1"/>
</dbReference>
<dbReference type="CDD" id="cd01434">
    <property type="entry name" value="EFG_mtEFG1_IV"/>
    <property type="match status" value="1"/>
</dbReference>
<dbReference type="CDD" id="cd03713">
    <property type="entry name" value="EFG_mtEFG_C"/>
    <property type="match status" value="1"/>
</dbReference>
<dbReference type="CDD" id="cd04088">
    <property type="entry name" value="EFG_mtEFG_II"/>
    <property type="match status" value="1"/>
</dbReference>
<dbReference type="FunFam" id="2.40.30.10:FF:000006">
    <property type="entry name" value="Elongation factor G"/>
    <property type="match status" value="1"/>
</dbReference>
<dbReference type="FunFam" id="3.30.230.10:FF:000003">
    <property type="entry name" value="Elongation factor G"/>
    <property type="match status" value="1"/>
</dbReference>
<dbReference type="FunFam" id="3.30.70.240:FF:000001">
    <property type="entry name" value="Elongation factor G"/>
    <property type="match status" value="1"/>
</dbReference>
<dbReference type="FunFam" id="3.30.70.870:FF:000001">
    <property type="entry name" value="Elongation factor G"/>
    <property type="match status" value="1"/>
</dbReference>
<dbReference type="FunFam" id="3.40.50.300:FF:000029">
    <property type="entry name" value="Elongation factor G"/>
    <property type="match status" value="1"/>
</dbReference>
<dbReference type="Gene3D" id="3.30.230.10">
    <property type="match status" value="1"/>
</dbReference>
<dbReference type="Gene3D" id="3.30.70.240">
    <property type="match status" value="1"/>
</dbReference>
<dbReference type="Gene3D" id="3.30.70.870">
    <property type="entry name" value="Elongation Factor G (Translational Gtpase), domain 3"/>
    <property type="match status" value="1"/>
</dbReference>
<dbReference type="Gene3D" id="3.40.50.300">
    <property type="entry name" value="P-loop containing nucleotide triphosphate hydrolases"/>
    <property type="match status" value="1"/>
</dbReference>
<dbReference type="Gene3D" id="2.40.30.10">
    <property type="entry name" value="Translation factors"/>
    <property type="match status" value="1"/>
</dbReference>
<dbReference type="HAMAP" id="MF_00054_B">
    <property type="entry name" value="EF_G_EF_2_B"/>
    <property type="match status" value="1"/>
</dbReference>
<dbReference type="InterPro" id="IPR053905">
    <property type="entry name" value="EF-G-like_DII"/>
</dbReference>
<dbReference type="InterPro" id="IPR041095">
    <property type="entry name" value="EFG_II"/>
</dbReference>
<dbReference type="InterPro" id="IPR009022">
    <property type="entry name" value="EFG_III"/>
</dbReference>
<dbReference type="InterPro" id="IPR035647">
    <property type="entry name" value="EFG_III/V"/>
</dbReference>
<dbReference type="InterPro" id="IPR047872">
    <property type="entry name" value="EFG_IV"/>
</dbReference>
<dbReference type="InterPro" id="IPR035649">
    <property type="entry name" value="EFG_V"/>
</dbReference>
<dbReference type="InterPro" id="IPR000640">
    <property type="entry name" value="EFG_V-like"/>
</dbReference>
<dbReference type="InterPro" id="IPR031157">
    <property type="entry name" value="G_TR_CS"/>
</dbReference>
<dbReference type="InterPro" id="IPR027417">
    <property type="entry name" value="P-loop_NTPase"/>
</dbReference>
<dbReference type="InterPro" id="IPR020568">
    <property type="entry name" value="Ribosomal_Su5_D2-typ_SF"/>
</dbReference>
<dbReference type="InterPro" id="IPR014721">
    <property type="entry name" value="Ribsml_uS5_D2-typ_fold_subgr"/>
</dbReference>
<dbReference type="InterPro" id="IPR005225">
    <property type="entry name" value="Small_GTP-bd"/>
</dbReference>
<dbReference type="InterPro" id="IPR000795">
    <property type="entry name" value="T_Tr_GTP-bd_dom"/>
</dbReference>
<dbReference type="InterPro" id="IPR009000">
    <property type="entry name" value="Transl_B-barrel_sf"/>
</dbReference>
<dbReference type="InterPro" id="IPR004540">
    <property type="entry name" value="Transl_elong_EFG/EF2"/>
</dbReference>
<dbReference type="InterPro" id="IPR005517">
    <property type="entry name" value="Transl_elong_EFG/EF2_IV"/>
</dbReference>
<dbReference type="NCBIfam" id="TIGR00484">
    <property type="entry name" value="EF-G"/>
    <property type="match status" value="1"/>
</dbReference>
<dbReference type="NCBIfam" id="NF009381">
    <property type="entry name" value="PRK12740.1-5"/>
    <property type="match status" value="1"/>
</dbReference>
<dbReference type="NCBIfam" id="TIGR00231">
    <property type="entry name" value="small_GTP"/>
    <property type="match status" value="1"/>
</dbReference>
<dbReference type="PANTHER" id="PTHR43261:SF1">
    <property type="entry name" value="RIBOSOME-RELEASING FACTOR 2, MITOCHONDRIAL"/>
    <property type="match status" value="1"/>
</dbReference>
<dbReference type="PANTHER" id="PTHR43261">
    <property type="entry name" value="TRANSLATION ELONGATION FACTOR G-RELATED"/>
    <property type="match status" value="1"/>
</dbReference>
<dbReference type="Pfam" id="PF22042">
    <property type="entry name" value="EF-G_D2"/>
    <property type="match status" value="1"/>
</dbReference>
<dbReference type="Pfam" id="PF00679">
    <property type="entry name" value="EFG_C"/>
    <property type="match status" value="1"/>
</dbReference>
<dbReference type="Pfam" id="PF14492">
    <property type="entry name" value="EFG_III"/>
    <property type="match status" value="1"/>
</dbReference>
<dbReference type="Pfam" id="PF03764">
    <property type="entry name" value="EFG_IV"/>
    <property type="match status" value="1"/>
</dbReference>
<dbReference type="Pfam" id="PF00009">
    <property type="entry name" value="GTP_EFTU"/>
    <property type="match status" value="1"/>
</dbReference>
<dbReference type="PRINTS" id="PR00315">
    <property type="entry name" value="ELONGATNFCT"/>
</dbReference>
<dbReference type="SMART" id="SM00838">
    <property type="entry name" value="EFG_C"/>
    <property type="match status" value="1"/>
</dbReference>
<dbReference type="SMART" id="SM00889">
    <property type="entry name" value="EFG_IV"/>
    <property type="match status" value="1"/>
</dbReference>
<dbReference type="SUPFAM" id="SSF54980">
    <property type="entry name" value="EF-G C-terminal domain-like"/>
    <property type="match status" value="2"/>
</dbReference>
<dbReference type="SUPFAM" id="SSF52540">
    <property type="entry name" value="P-loop containing nucleoside triphosphate hydrolases"/>
    <property type="match status" value="1"/>
</dbReference>
<dbReference type="SUPFAM" id="SSF54211">
    <property type="entry name" value="Ribosomal protein S5 domain 2-like"/>
    <property type="match status" value="1"/>
</dbReference>
<dbReference type="SUPFAM" id="SSF50447">
    <property type="entry name" value="Translation proteins"/>
    <property type="match status" value="1"/>
</dbReference>
<dbReference type="PROSITE" id="PS00301">
    <property type="entry name" value="G_TR_1"/>
    <property type="match status" value="1"/>
</dbReference>
<dbReference type="PROSITE" id="PS51722">
    <property type="entry name" value="G_TR_2"/>
    <property type="match status" value="1"/>
</dbReference>
<gene>
    <name evidence="1" type="primary">fusA</name>
    <name type="ordered locus">DehaBAV1_0449</name>
</gene>
<accession>A5FRY7</accession>